<name>KPYM_CHICK</name>
<proteinExistence type="evidence at transcript level"/>
<accession>P00548</accession>
<feature type="initiator methionine" description="Removed" evidence="2">
    <location>
        <position position="1"/>
    </location>
</feature>
<feature type="chain" id="PRO_0000112097" description="Pyruvate kinase PKM">
    <location>
        <begin position="2"/>
        <end position="530"/>
    </location>
</feature>
<feature type="binding site" evidence="4">
    <location>
        <position position="72"/>
    </location>
    <ligand>
        <name>substrate</name>
    </ligand>
</feature>
<feature type="binding site" evidence="3">
    <location>
        <begin position="74"/>
        <end position="77"/>
    </location>
    <ligand>
        <name>ATP</name>
        <dbReference type="ChEBI" id="CHEBI:30616"/>
    </ligand>
</feature>
<feature type="binding site" evidence="3">
    <location>
        <position position="74"/>
    </location>
    <ligand>
        <name>K(+)</name>
        <dbReference type="ChEBI" id="CHEBI:29103"/>
    </ligand>
</feature>
<feature type="binding site" evidence="3">
    <location>
        <position position="76"/>
    </location>
    <ligand>
        <name>K(+)</name>
        <dbReference type="ChEBI" id="CHEBI:29103"/>
    </ligand>
</feature>
<feature type="binding site" evidence="3">
    <location>
        <position position="112"/>
    </location>
    <ligand>
        <name>K(+)</name>
        <dbReference type="ChEBI" id="CHEBI:29103"/>
    </ligand>
</feature>
<feature type="binding site" evidence="3">
    <location>
        <position position="113"/>
    </location>
    <ligand>
        <name>K(+)</name>
        <dbReference type="ChEBI" id="CHEBI:29103"/>
    </ligand>
</feature>
<feature type="binding site" evidence="3">
    <location>
        <position position="119"/>
    </location>
    <ligand>
        <name>ATP</name>
        <dbReference type="ChEBI" id="CHEBI:30616"/>
    </ligand>
</feature>
<feature type="binding site" evidence="3">
    <location>
        <position position="206"/>
    </location>
    <ligand>
        <name>ATP</name>
        <dbReference type="ChEBI" id="CHEBI:30616"/>
    </ligand>
</feature>
<feature type="binding site" evidence="4">
    <location>
        <position position="269"/>
    </location>
    <ligand>
        <name>substrate</name>
    </ligand>
</feature>
<feature type="binding site" evidence="3">
    <location>
        <position position="271"/>
    </location>
    <ligand>
        <name>Mg(2+)</name>
        <dbReference type="ChEBI" id="CHEBI:18420"/>
    </ligand>
</feature>
<feature type="binding site" evidence="4">
    <location>
        <position position="294"/>
    </location>
    <ligand>
        <name>substrate</name>
    </ligand>
</feature>
<feature type="binding site" evidence="3">
    <location>
        <position position="295"/>
    </location>
    <ligand>
        <name>Mg(2+)</name>
        <dbReference type="ChEBI" id="CHEBI:18420"/>
    </ligand>
</feature>
<feature type="binding site" evidence="4">
    <location>
        <position position="295"/>
    </location>
    <ligand>
        <name>substrate</name>
    </ligand>
</feature>
<feature type="binding site" evidence="4">
    <location>
        <position position="327"/>
    </location>
    <ligand>
        <name>substrate</name>
    </ligand>
</feature>
<feature type="binding site" evidence="3">
    <location>
        <begin position="431"/>
        <end position="436"/>
    </location>
    <ligand>
        <name>beta-D-fructose 1,6-bisphosphate</name>
        <dbReference type="ChEBI" id="CHEBI:32966"/>
        <note>allosteric activator</note>
    </ligand>
</feature>
<feature type="binding site" evidence="3">
    <location>
        <position position="481"/>
    </location>
    <ligand>
        <name>beta-D-fructose 1,6-bisphosphate</name>
        <dbReference type="ChEBI" id="CHEBI:32966"/>
        <note>allosteric activator</note>
    </ligand>
</feature>
<feature type="binding site" evidence="3">
    <location>
        <position position="488"/>
    </location>
    <ligand>
        <name>beta-D-fructose 1,6-bisphosphate</name>
        <dbReference type="ChEBI" id="CHEBI:32966"/>
        <note>allosteric activator</note>
    </ligand>
</feature>
<feature type="binding site" evidence="3">
    <location>
        <begin position="515"/>
        <end position="520"/>
    </location>
    <ligand>
        <name>beta-D-fructose 1,6-bisphosphate</name>
        <dbReference type="ChEBI" id="CHEBI:32966"/>
        <note>allosteric activator</note>
    </ligand>
</feature>
<feature type="site" description="Transition state stabilizer" evidence="1">
    <location>
        <position position="269"/>
    </location>
</feature>
<evidence type="ECO:0000250" key="1">
    <source>
        <dbReference type="UniProtKB" id="P00549"/>
    </source>
</evidence>
<evidence type="ECO:0000250" key="2">
    <source>
        <dbReference type="UniProtKB" id="P11979"/>
    </source>
</evidence>
<evidence type="ECO:0000250" key="3">
    <source>
        <dbReference type="UniProtKB" id="P14618"/>
    </source>
</evidence>
<evidence type="ECO:0000250" key="4">
    <source>
        <dbReference type="UniProtKB" id="P30613"/>
    </source>
</evidence>
<evidence type="ECO:0000305" key="5"/>
<organism>
    <name type="scientific">Gallus gallus</name>
    <name type="common">Chicken</name>
    <dbReference type="NCBI Taxonomy" id="9031"/>
    <lineage>
        <taxon>Eukaryota</taxon>
        <taxon>Metazoa</taxon>
        <taxon>Chordata</taxon>
        <taxon>Craniata</taxon>
        <taxon>Vertebrata</taxon>
        <taxon>Euteleostomi</taxon>
        <taxon>Archelosauria</taxon>
        <taxon>Archosauria</taxon>
        <taxon>Dinosauria</taxon>
        <taxon>Saurischia</taxon>
        <taxon>Theropoda</taxon>
        <taxon>Coelurosauria</taxon>
        <taxon>Aves</taxon>
        <taxon>Neognathae</taxon>
        <taxon>Galloanserae</taxon>
        <taxon>Galliformes</taxon>
        <taxon>Phasianidae</taxon>
        <taxon>Phasianinae</taxon>
        <taxon>Gallus</taxon>
    </lineage>
</organism>
<gene>
    <name type="primary">PKM</name>
</gene>
<reference key="1">
    <citation type="journal article" date="1983" name="Proc. Natl. Acad. Sci. U.S.A.">
        <title>Primary structure of chicken muscle pyruvate kinase mRNA.</title>
        <authorList>
            <person name="Lonberg N."/>
            <person name="Gilbert W."/>
        </authorList>
    </citation>
    <scope>NUCLEOTIDE SEQUENCE [MRNA]</scope>
</reference>
<reference key="2">
    <citation type="journal article" date="1985" name="Cell">
        <title>Intron/exon structure of the chicken pyruvate kinase gene.</title>
        <authorList>
            <person name="Lonberg N."/>
            <person name="Gilbert W."/>
        </authorList>
    </citation>
    <scope>NUCLEOTIDE SEQUENCE [GENOMIC DNA]</scope>
</reference>
<sequence>MSKHHDAGTAFIQTQQLHAAMADTFLEHMCRLDIDSEPTIARNTGIICTIGPASRSVDKLKEMIKSGMNVARLNFSHGTHEYHEGTIKNVREATESFASDPITYRPVAIALDTKGPEIRTGLIKGSGTAEVELKKGAALKVTLDNAFMENCDENVLWVDYKNLIKVIDVGSKIYVDDGLISLLVKEKGKDFVMTEVENGGMLGSKKGVNLPGAAVDLPAVSEKDIQDLKFGVEQNVDMVFASFIRKAADVHAVRKVLGEKGKHIKIISKIENHEGVRRFDEIMEASDGIMVARGDLGIEIPAEKVFLAQKMMIGRCNRAGKPIICATQMLESMIKKPRPTRAEGSDVANAVLDGADCIMLSGETAKGDYPLEAVRMQHAIAREAEAAMFHRQQFEEILRHSVHHREPADAMAAGAVEASFKCLAAALIVMTESGRSAHLVSRYRPRAPIIAVTRNDQTARQAHLYRGVFPVLCKQPAHDAWAEDVDLRVNLGMNVGKARGFFKTGDLVIVLTGWRPGSGYTNTMRVVPVP</sequence>
<dbReference type="EC" id="2.7.1.40" evidence="3"/>
<dbReference type="EMBL" id="J00903">
    <property type="protein sequence ID" value="AAA49021.1"/>
    <property type="molecule type" value="mRNA"/>
</dbReference>
<dbReference type="EMBL" id="M18793">
    <property type="protein sequence ID" value="AAA49020.1"/>
    <property type="molecule type" value="Genomic_DNA"/>
</dbReference>
<dbReference type="EMBL" id="M10619">
    <property type="protein sequence ID" value="AAA49020.1"/>
    <property type="status" value="JOINED"/>
    <property type="molecule type" value="Genomic_DNA"/>
</dbReference>
<dbReference type="EMBL" id="M18788">
    <property type="protein sequence ID" value="AAA49020.1"/>
    <property type="status" value="JOINED"/>
    <property type="molecule type" value="Genomic_DNA"/>
</dbReference>
<dbReference type="EMBL" id="M18789">
    <property type="protein sequence ID" value="AAA49020.1"/>
    <property type="status" value="JOINED"/>
    <property type="molecule type" value="Genomic_DNA"/>
</dbReference>
<dbReference type="EMBL" id="M18790">
    <property type="protein sequence ID" value="AAA49020.1"/>
    <property type="status" value="JOINED"/>
    <property type="molecule type" value="Genomic_DNA"/>
</dbReference>
<dbReference type="EMBL" id="M18791">
    <property type="protein sequence ID" value="AAA49020.1"/>
    <property type="status" value="JOINED"/>
    <property type="molecule type" value="Genomic_DNA"/>
</dbReference>
<dbReference type="EMBL" id="M18792">
    <property type="protein sequence ID" value="AAA49020.1"/>
    <property type="status" value="JOINED"/>
    <property type="molecule type" value="Genomic_DNA"/>
</dbReference>
<dbReference type="PIR" id="I50408">
    <property type="entry name" value="KICHPM"/>
</dbReference>
<dbReference type="RefSeq" id="NP_990800.1">
    <property type="nucleotide sequence ID" value="NM_205469.1"/>
</dbReference>
<dbReference type="SMR" id="P00548"/>
<dbReference type="BioGRID" id="676705">
    <property type="interactions" value="2"/>
</dbReference>
<dbReference type="FunCoup" id="P00548">
    <property type="interactions" value="1802"/>
</dbReference>
<dbReference type="IntAct" id="P00548">
    <property type="interactions" value="1"/>
</dbReference>
<dbReference type="STRING" id="9031.ENSGALP00000049508"/>
<dbReference type="PaxDb" id="9031-ENSGALP00000034108"/>
<dbReference type="GeneID" id="396456"/>
<dbReference type="KEGG" id="gga:396456"/>
<dbReference type="CTD" id="5313"/>
<dbReference type="VEuPathDB" id="HostDB:geneid_396456"/>
<dbReference type="eggNOG" id="KOG2323">
    <property type="taxonomic scope" value="Eukaryota"/>
</dbReference>
<dbReference type="InParanoid" id="P00548"/>
<dbReference type="OMA" id="RVHHIGE"/>
<dbReference type="OrthoDB" id="108365at2759"/>
<dbReference type="PhylomeDB" id="P00548"/>
<dbReference type="Reactome" id="R-GGA-352882">
    <property type="pathway name" value="Glycolysis"/>
</dbReference>
<dbReference type="Reactome" id="R-GGA-6798695">
    <property type="pathway name" value="Neutrophil degranulation"/>
</dbReference>
<dbReference type="Reactome" id="R-GGA-70171">
    <property type="pathway name" value="Glycolysis"/>
</dbReference>
<dbReference type="Reactome" id="R-GGA-70268">
    <property type="pathway name" value="Pyruvate metabolism"/>
</dbReference>
<dbReference type="Reactome" id="R-GGA-9861718">
    <property type="pathway name" value="Regulation of pyruvate metabolism"/>
</dbReference>
<dbReference type="UniPathway" id="UPA00109">
    <property type="reaction ID" value="UER00188"/>
</dbReference>
<dbReference type="PRO" id="PR:P00548"/>
<dbReference type="Proteomes" id="UP000000539">
    <property type="component" value="Chromosome 10"/>
</dbReference>
<dbReference type="Bgee" id="ENSGALG00000001992">
    <property type="expression patterns" value="Expressed in muscle tissue and 13 other cell types or tissues"/>
</dbReference>
<dbReference type="GO" id="GO:0005737">
    <property type="term" value="C:cytoplasm"/>
    <property type="evidence" value="ECO:0000318"/>
    <property type="project" value="GO_Central"/>
</dbReference>
<dbReference type="GO" id="GO:0005829">
    <property type="term" value="C:cytosol"/>
    <property type="evidence" value="ECO:0000304"/>
    <property type="project" value="Reactome"/>
</dbReference>
<dbReference type="GO" id="GO:0005524">
    <property type="term" value="F:ATP binding"/>
    <property type="evidence" value="ECO:0007669"/>
    <property type="project" value="UniProtKB-KW"/>
</dbReference>
<dbReference type="GO" id="GO:0016301">
    <property type="term" value="F:kinase activity"/>
    <property type="evidence" value="ECO:0007669"/>
    <property type="project" value="UniProtKB-KW"/>
</dbReference>
<dbReference type="GO" id="GO:0000287">
    <property type="term" value="F:magnesium ion binding"/>
    <property type="evidence" value="ECO:0007669"/>
    <property type="project" value="InterPro"/>
</dbReference>
<dbReference type="GO" id="GO:0030955">
    <property type="term" value="F:potassium ion binding"/>
    <property type="evidence" value="ECO:0007669"/>
    <property type="project" value="InterPro"/>
</dbReference>
<dbReference type="GO" id="GO:0004743">
    <property type="term" value="F:pyruvate kinase activity"/>
    <property type="evidence" value="ECO:0000318"/>
    <property type="project" value="GO_Central"/>
</dbReference>
<dbReference type="GO" id="GO:0032869">
    <property type="term" value="P:cellular response to insulin stimulus"/>
    <property type="evidence" value="ECO:0000318"/>
    <property type="project" value="GO_Central"/>
</dbReference>
<dbReference type="GO" id="GO:0006096">
    <property type="term" value="P:glycolytic process"/>
    <property type="evidence" value="ECO:0000318"/>
    <property type="project" value="GO_Central"/>
</dbReference>
<dbReference type="CDD" id="cd00288">
    <property type="entry name" value="Pyruvate_Kinase"/>
    <property type="match status" value="1"/>
</dbReference>
<dbReference type="FunFam" id="3.20.20.60:FF:000025">
    <property type="entry name" value="Pyruvate kinase"/>
    <property type="match status" value="1"/>
</dbReference>
<dbReference type="FunFam" id="3.40.1380.20:FF:000001">
    <property type="entry name" value="Pyruvate kinase"/>
    <property type="match status" value="1"/>
</dbReference>
<dbReference type="FunFam" id="3.40.1380.20:FF:000002">
    <property type="entry name" value="Pyruvate kinase"/>
    <property type="match status" value="1"/>
</dbReference>
<dbReference type="FunFam" id="2.40.33.10:FF:000023">
    <property type="entry name" value="Pyruvate kinase PKM"/>
    <property type="match status" value="1"/>
</dbReference>
<dbReference type="Gene3D" id="3.20.20.60">
    <property type="entry name" value="Phosphoenolpyruvate-binding domains"/>
    <property type="match status" value="1"/>
</dbReference>
<dbReference type="Gene3D" id="2.40.33.10">
    <property type="entry name" value="PK beta-barrel domain-like"/>
    <property type="match status" value="1"/>
</dbReference>
<dbReference type="Gene3D" id="3.40.1380.20">
    <property type="entry name" value="Pyruvate kinase, C-terminal domain"/>
    <property type="match status" value="2"/>
</dbReference>
<dbReference type="InterPro" id="IPR001697">
    <property type="entry name" value="Pyr_Knase"/>
</dbReference>
<dbReference type="InterPro" id="IPR015813">
    <property type="entry name" value="Pyrv/PenolPyrv_kinase-like_dom"/>
</dbReference>
<dbReference type="InterPro" id="IPR040442">
    <property type="entry name" value="Pyrv_kinase-like_dom_sf"/>
</dbReference>
<dbReference type="InterPro" id="IPR011037">
    <property type="entry name" value="Pyrv_Knase-like_insert_dom_sf"/>
</dbReference>
<dbReference type="InterPro" id="IPR018209">
    <property type="entry name" value="Pyrv_Knase_AS"/>
</dbReference>
<dbReference type="InterPro" id="IPR015793">
    <property type="entry name" value="Pyrv_Knase_brl"/>
</dbReference>
<dbReference type="InterPro" id="IPR015795">
    <property type="entry name" value="Pyrv_Knase_C"/>
</dbReference>
<dbReference type="InterPro" id="IPR036918">
    <property type="entry name" value="Pyrv_Knase_C_sf"/>
</dbReference>
<dbReference type="InterPro" id="IPR015806">
    <property type="entry name" value="Pyrv_Knase_insert_dom_sf"/>
</dbReference>
<dbReference type="NCBIfam" id="NF004491">
    <property type="entry name" value="PRK05826.1"/>
    <property type="match status" value="1"/>
</dbReference>
<dbReference type="NCBIfam" id="NF004978">
    <property type="entry name" value="PRK06354.1"/>
    <property type="match status" value="1"/>
</dbReference>
<dbReference type="NCBIfam" id="TIGR01064">
    <property type="entry name" value="pyruv_kin"/>
    <property type="match status" value="1"/>
</dbReference>
<dbReference type="PANTHER" id="PTHR11817">
    <property type="entry name" value="PYRUVATE KINASE"/>
    <property type="match status" value="1"/>
</dbReference>
<dbReference type="Pfam" id="PF00224">
    <property type="entry name" value="PK"/>
    <property type="match status" value="1"/>
</dbReference>
<dbReference type="Pfam" id="PF02887">
    <property type="entry name" value="PK_C"/>
    <property type="match status" value="1"/>
</dbReference>
<dbReference type="PRINTS" id="PR01050">
    <property type="entry name" value="PYRUVTKNASE"/>
</dbReference>
<dbReference type="SUPFAM" id="SSF51621">
    <property type="entry name" value="Phosphoenolpyruvate/pyruvate domain"/>
    <property type="match status" value="1"/>
</dbReference>
<dbReference type="SUPFAM" id="SSF50800">
    <property type="entry name" value="PK beta-barrel domain-like"/>
    <property type="match status" value="1"/>
</dbReference>
<dbReference type="SUPFAM" id="SSF52935">
    <property type="entry name" value="PK C-terminal domain-like"/>
    <property type="match status" value="1"/>
</dbReference>
<dbReference type="PROSITE" id="PS00110">
    <property type="entry name" value="PYRUVATE_KINASE"/>
    <property type="match status" value="1"/>
</dbReference>
<protein>
    <recommendedName>
        <fullName>Pyruvate kinase PKM</fullName>
        <ecNumber evidence="3">2.7.1.40</ecNumber>
    </recommendedName>
</protein>
<keyword id="KW-0021">Allosteric enzyme</keyword>
<keyword id="KW-0067">ATP-binding</keyword>
<keyword id="KW-0324">Glycolysis</keyword>
<keyword id="KW-0418">Kinase</keyword>
<keyword id="KW-0460">Magnesium</keyword>
<keyword id="KW-0479">Metal-binding</keyword>
<keyword id="KW-0547">Nucleotide-binding</keyword>
<keyword id="KW-0597">Phosphoprotein</keyword>
<keyword id="KW-0630">Potassium</keyword>
<keyword id="KW-0670">Pyruvate</keyword>
<keyword id="KW-1185">Reference proteome</keyword>
<keyword id="KW-0808">Transferase</keyword>
<comment type="function">
    <text evidence="3">Glycolytic enzyme that catalyzes the transfer of a phosphoryl group from phosphoenolpyruvate (PEP) to ADP, generating ATP.</text>
</comment>
<comment type="catalytic activity">
    <reaction evidence="3">
        <text>pyruvate + ATP = phosphoenolpyruvate + ADP + H(+)</text>
        <dbReference type="Rhea" id="RHEA:18157"/>
        <dbReference type="ChEBI" id="CHEBI:15361"/>
        <dbReference type="ChEBI" id="CHEBI:15378"/>
        <dbReference type="ChEBI" id="CHEBI:30616"/>
        <dbReference type="ChEBI" id="CHEBI:58702"/>
        <dbReference type="ChEBI" id="CHEBI:456216"/>
        <dbReference type="EC" id="2.7.1.40"/>
    </reaction>
</comment>
<comment type="cofactor">
    <cofactor evidence="3">
        <name>Mg(2+)</name>
        <dbReference type="ChEBI" id="CHEBI:18420"/>
    </cofactor>
</comment>
<comment type="cofactor">
    <cofactor evidence="3">
        <name>K(+)</name>
        <dbReference type="ChEBI" id="CHEBI:29103"/>
    </cofactor>
</comment>
<comment type="activity regulation">
    <text evidence="3">Allosterically activated by fructose 1,6-bisphosphate.</text>
</comment>
<comment type="pathway">
    <text>Carbohydrate degradation; glycolysis; pyruvate from D-glyceraldehyde 3-phosphate: step 5/5.</text>
</comment>
<comment type="subunit">
    <text evidence="3">Homotetramer.</text>
</comment>
<comment type="miscellaneous">
    <text>This activity is regulated by glucose levels.</text>
</comment>
<comment type="similarity">
    <text evidence="5">Belongs to the pyruvate kinase family.</text>
</comment>